<feature type="chain" id="PRO_1000145914" description="DNA protection during starvation protein">
    <location>
        <begin position="1"/>
        <end position="167"/>
    </location>
</feature>
<feature type="binding site" evidence="1">
    <location>
        <position position="51"/>
    </location>
    <ligand>
        <name>Fe cation</name>
        <dbReference type="ChEBI" id="CHEBI:24875"/>
    </ligand>
</feature>
<feature type="binding site" evidence="1">
    <location>
        <position position="78"/>
    </location>
    <ligand>
        <name>Fe cation</name>
        <dbReference type="ChEBI" id="CHEBI:24875"/>
    </ligand>
</feature>
<feature type="binding site" evidence="1">
    <location>
        <position position="82"/>
    </location>
    <ligand>
        <name>Fe cation</name>
        <dbReference type="ChEBI" id="CHEBI:24875"/>
    </ligand>
</feature>
<keyword id="KW-0963">Cytoplasm</keyword>
<keyword id="KW-0226">DNA condensation</keyword>
<keyword id="KW-0238">DNA-binding</keyword>
<keyword id="KW-0408">Iron</keyword>
<keyword id="KW-0409">Iron storage</keyword>
<keyword id="KW-0479">Metal-binding</keyword>
<keyword id="KW-0560">Oxidoreductase</keyword>
<comment type="function">
    <text evidence="1">During stationary phase, binds the chromosome non-specifically, forming a highly ordered and stable dps-DNA co-crystal within which chromosomal DNA is condensed and protected from diverse damages. It protects DNA from oxidative damage by sequestering intracellular Fe(2+) ion and storing it in the form of Fe(3+) oxyhydroxide mineral, which can be released after reduction. One hydrogen peroxide oxidizes two Fe(2+) ions, which prevents hydroxyl radical production by the Fenton reaction.</text>
</comment>
<comment type="catalytic activity">
    <reaction evidence="1">
        <text>2 Fe(2+) + H2O2 + 2 H(+) = 2 Fe(3+) + 2 H2O</text>
        <dbReference type="Rhea" id="RHEA:48712"/>
        <dbReference type="ChEBI" id="CHEBI:15377"/>
        <dbReference type="ChEBI" id="CHEBI:15378"/>
        <dbReference type="ChEBI" id="CHEBI:16240"/>
        <dbReference type="ChEBI" id="CHEBI:29033"/>
        <dbReference type="ChEBI" id="CHEBI:29034"/>
    </reaction>
</comment>
<comment type="subunit">
    <text evidence="1">Homododecamer. The 12 subunits form a hollow sphere into which the mineral iron core of up to 500 Fe(3+) can be deposited.</text>
</comment>
<comment type="subcellular location">
    <subcellularLocation>
        <location evidence="1">Cytoplasm</location>
    </subcellularLocation>
</comment>
<comment type="similarity">
    <text evidence="1">Belongs to the Dps family.</text>
</comment>
<evidence type="ECO:0000255" key="1">
    <source>
        <dbReference type="HAMAP-Rule" id="MF_01441"/>
    </source>
</evidence>
<protein>
    <recommendedName>
        <fullName evidence="1">DNA protection during starvation protein</fullName>
        <ecNumber evidence="1">1.16.-.-</ecNumber>
    </recommendedName>
</protein>
<name>DPS_SALNS</name>
<proteinExistence type="inferred from homology"/>
<reference key="1">
    <citation type="journal article" date="2011" name="J. Bacteriol.">
        <title>Comparative genomics of 28 Salmonella enterica isolates: evidence for CRISPR-mediated adaptive sublineage evolution.</title>
        <authorList>
            <person name="Fricke W.F."/>
            <person name="Mammel M.K."/>
            <person name="McDermott P.F."/>
            <person name="Tartera C."/>
            <person name="White D.G."/>
            <person name="Leclerc J.E."/>
            <person name="Ravel J."/>
            <person name="Cebula T.A."/>
        </authorList>
    </citation>
    <scope>NUCLEOTIDE SEQUENCE [LARGE SCALE GENOMIC DNA]</scope>
    <source>
        <strain>SL254</strain>
    </source>
</reference>
<organism>
    <name type="scientific">Salmonella newport (strain SL254)</name>
    <dbReference type="NCBI Taxonomy" id="423368"/>
    <lineage>
        <taxon>Bacteria</taxon>
        <taxon>Pseudomonadati</taxon>
        <taxon>Pseudomonadota</taxon>
        <taxon>Gammaproteobacteria</taxon>
        <taxon>Enterobacterales</taxon>
        <taxon>Enterobacteriaceae</taxon>
        <taxon>Salmonella</taxon>
    </lineage>
</organism>
<sequence>MSTAKLVKTKASNLLYTRNDVSESDKKATVELLNRQVIQFIDLSLITKQAHWNMRGANFIAVHEMLDGFRTALTDHLDTMAERAVQLGGVALGTTQVINSKTPLKSYPLDIHNVQDHLKELADRYAVVANDVRKAIGEAKDEDTADIFTAASRDLDKFLWFIESNIE</sequence>
<dbReference type="EC" id="1.16.-.-" evidence="1"/>
<dbReference type="EMBL" id="CP001113">
    <property type="protein sequence ID" value="ACF62219.1"/>
    <property type="molecule type" value="Genomic_DNA"/>
</dbReference>
<dbReference type="RefSeq" id="WP_000100805.1">
    <property type="nucleotide sequence ID" value="NZ_CCMR01000003.1"/>
</dbReference>
<dbReference type="SMR" id="B4T089"/>
<dbReference type="KEGG" id="see:SNSL254_A0896"/>
<dbReference type="HOGENOM" id="CLU_098183_1_2_6"/>
<dbReference type="Proteomes" id="UP000008824">
    <property type="component" value="Chromosome"/>
</dbReference>
<dbReference type="GO" id="GO:0005737">
    <property type="term" value="C:cytoplasm"/>
    <property type="evidence" value="ECO:0007669"/>
    <property type="project" value="UniProtKB-SubCell"/>
</dbReference>
<dbReference type="GO" id="GO:0003677">
    <property type="term" value="F:DNA binding"/>
    <property type="evidence" value="ECO:0007669"/>
    <property type="project" value="UniProtKB-UniRule"/>
</dbReference>
<dbReference type="GO" id="GO:0008199">
    <property type="term" value="F:ferric iron binding"/>
    <property type="evidence" value="ECO:0007669"/>
    <property type="project" value="UniProtKB-UniRule"/>
</dbReference>
<dbReference type="GO" id="GO:0016722">
    <property type="term" value="F:oxidoreductase activity, acting on metal ions"/>
    <property type="evidence" value="ECO:0007669"/>
    <property type="project" value="InterPro"/>
</dbReference>
<dbReference type="GO" id="GO:0030261">
    <property type="term" value="P:chromosome condensation"/>
    <property type="evidence" value="ECO:0007669"/>
    <property type="project" value="UniProtKB-KW"/>
</dbReference>
<dbReference type="GO" id="GO:0006879">
    <property type="term" value="P:intracellular iron ion homeostasis"/>
    <property type="evidence" value="ECO:0007669"/>
    <property type="project" value="UniProtKB-KW"/>
</dbReference>
<dbReference type="CDD" id="cd01043">
    <property type="entry name" value="DPS"/>
    <property type="match status" value="1"/>
</dbReference>
<dbReference type="FunFam" id="1.20.1260.10:FF:000003">
    <property type="entry name" value="DNA protection during starvation protein"/>
    <property type="match status" value="1"/>
</dbReference>
<dbReference type="Gene3D" id="1.20.1260.10">
    <property type="match status" value="1"/>
</dbReference>
<dbReference type="HAMAP" id="MF_01441">
    <property type="entry name" value="Dps"/>
    <property type="match status" value="1"/>
</dbReference>
<dbReference type="InterPro" id="IPR002177">
    <property type="entry name" value="DPS_DNA-bd"/>
</dbReference>
<dbReference type="InterPro" id="IPR023188">
    <property type="entry name" value="DPS_DNA-bd_CS"/>
</dbReference>
<dbReference type="InterPro" id="IPR023067">
    <property type="entry name" value="Dps_gammaproteobac"/>
</dbReference>
<dbReference type="InterPro" id="IPR012347">
    <property type="entry name" value="Ferritin-like"/>
</dbReference>
<dbReference type="InterPro" id="IPR009078">
    <property type="entry name" value="Ferritin-like_SF"/>
</dbReference>
<dbReference type="InterPro" id="IPR008331">
    <property type="entry name" value="Ferritin_DPS_dom"/>
</dbReference>
<dbReference type="NCBIfam" id="NF006975">
    <property type="entry name" value="PRK09448.1"/>
    <property type="match status" value="1"/>
</dbReference>
<dbReference type="PANTHER" id="PTHR42932:SF3">
    <property type="entry name" value="DNA PROTECTION DURING STARVATION PROTEIN"/>
    <property type="match status" value="1"/>
</dbReference>
<dbReference type="PANTHER" id="PTHR42932">
    <property type="entry name" value="GENERAL STRESS PROTEIN 20U"/>
    <property type="match status" value="1"/>
</dbReference>
<dbReference type="Pfam" id="PF00210">
    <property type="entry name" value="Ferritin"/>
    <property type="match status" value="1"/>
</dbReference>
<dbReference type="PIRSF" id="PIRSF005900">
    <property type="entry name" value="Dps"/>
    <property type="match status" value="1"/>
</dbReference>
<dbReference type="PRINTS" id="PR01346">
    <property type="entry name" value="HELNAPAPROT"/>
</dbReference>
<dbReference type="SUPFAM" id="SSF47240">
    <property type="entry name" value="Ferritin-like"/>
    <property type="match status" value="1"/>
</dbReference>
<dbReference type="PROSITE" id="PS00818">
    <property type="entry name" value="DPS_1"/>
    <property type="match status" value="1"/>
</dbReference>
<dbReference type="PROSITE" id="PS00819">
    <property type="entry name" value="DPS_2"/>
    <property type="match status" value="1"/>
</dbReference>
<gene>
    <name evidence="1" type="primary">dps</name>
    <name type="ordered locus">SNSL254_A0896</name>
</gene>
<accession>B4T089</accession>